<dbReference type="EC" id="2.3.1.89" evidence="1"/>
<dbReference type="EMBL" id="BA000028">
    <property type="protein sequence ID" value="BAC13358.1"/>
    <property type="molecule type" value="Genomic_DNA"/>
</dbReference>
<dbReference type="RefSeq" id="WP_011065808.1">
    <property type="nucleotide sequence ID" value="NC_004193.1"/>
</dbReference>
<dbReference type="SMR" id="Q8ERA4"/>
<dbReference type="STRING" id="221109.gene:10733642"/>
<dbReference type="KEGG" id="oih:OB1402"/>
<dbReference type="eggNOG" id="COG2171">
    <property type="taxonomic scope" value="Bacteria"/>
</dbReference>
<dbReference type="HOGENOM" id="CLU_103751_0_0_9"/>
<dbReference type="OrthoDB" id="9788080at2"/>
<dbReference type="PhylomeDB" id="Q8ERA4"/>
<dbReference type="UniPathway" id="UPA00034">
    <property type="reaction ID" value="UER00022"/>
</dbReference>
<dbReference type="Proteomes" id="UP000000822">
    <property type="component" value="Chromosome"/>
</dbReference>
<dbReference type="GO" id="GO:0047200">
    <property type="term" value="F:tetrahydrodipicolinate N-acetyltransferase activity"/>
    <property type="evidence" value="ECO:0007669"/>
    <property type="project" value="UniProtKB-EC"/>
</dbReference>
<dbReference type="GO" id="GO:0019877">
    <property type="term" value="P:diaminopimelate biosynthetic process"/>
    <property type="evidence" value="ECO:0007669"/>
    <property type="project" value="UniProtKB-UniRule"/>
</dbReference>
<dbReference type="GO" id="GO:0009089">
    <property type="term" value="P:lysine biosynthetic process via diaminopimelate"/>
    <property type="evidence" value="ECO:0007669"/>
    <property type="project" value="UniProtKB-UniRule"/>
</dbReference>
<dbReference type="CDD" id="cd03350">
    <property type="entry name" value="LbH_THP_succinylT"/>
    <property type="match status" value="1"/>
</dbReference>
<dbReference type="Gene3D" id="2.160.10.10">
    <property type="entry name" value="Hexapeptide repeat proteins"/>
    <property type="match status" value="1"/>
</dbReference>
<dbReference type="Gene3D" id="3.30.70.250">
    <property type="entry name" value="Malonyl-CoA ACP transacylase, ACP-binding"/>
    <property type="match status" value="1"/>
</dbReference>
<dbReference type="HAMAP" id="MF_01691">
    <property type="entry name" value="DapH"/>
    <property type="match status" value="1"/>
</dbReference>
<dbReference type="InterPro" id="IPR019873">
    <property type="entry name" value="DapH"/>
</dbReference>
<dbReference type="InterPro" id="IPR013710">
    <property type="entry name" value="DapH_N"/>
</dbReference>
<dbReference type="InterPro" id="IPR001451">
    <property type="entry name" value="Hexapep"/>
</dbReference>
<dbReference type="InterPro" id="IPR018357">
    <property type="entry name" value="Hexapep_transf_CS"/>
</dbReference>
<dbReference type="InterPro" id="IPR050179">
    <property type="entry name" value="Trans_hexapeptide_repeat"/>
</dbReference>
<dbReference type="InterPro" id="IPR011004">
    <property type="entry name" value="Trimer_LpxA-like_sf"/>
</dbReference>
<dbReference type="NCBIfam" id="TIGR03532">
    <property type="entry name" value="DapD_Ac"/>
    <property type="match status" value="1"/>
</dbReference>
<dbReference type="PANTHER" id="PTHR43300:SF10">
    <property type="entry name" value="2,3,4,5-TETRAHYDROPYRIDINE-2,6-DICARBOXYLATE N-ACETYLTRANSFERASE"/>
    <property type="match status" value="1"/>
</dbReference>
<dbReference type="PANTHER" id="PTHR43300">
    <property type="entry name" value="ACETYLTRANSFERASE"/>
    <property type="match status" value="1"/>
</dbReference>
<dbReference type="Pfam" id="PF08503">
    <property type="entry name" value="DapH_N"/>
    <property type="match status" value="1"/>
</dbReference>
<dbReference type="Pfam" id="PF00132">
    <property type="entry name" value="Hexapep"/>
    <property type="match status" value="1"/>
</dbReference>
<dbReference type="Pfam" id="PF14602">
    <property type="entry name" value="Hexapep_2"/>
    <property type="match status" value="1"/>
</dbReference>
<dbReference type="SUPFAM" id="SSF51161">
    <property type="entry name" value="Trimeric LpxA-like enzymes"/>
    <property type="match status" value="1"/>
</dbReference>
<dbReference type="PROSITE" id="PS00101">
    <property type="entry name" value="HEXAPEP_TRANSFERASES"/>
    <property type="match status" value="1"/>
</dbReference>
<organism>
    <name type="scientific">Oceanobacillus iheyensis (strain DSM 14371 / CIP 107618 / JCM 11309 / KCTC 3954 / HTE831)</name>
    <dbReference type="NCBI Taxonomy" id="221109"/>
    <lineage>
        <taxon>Bacteria</taxon>
        <taxon>Bacillati</taxon>
        <taxon>Bacillota</taxon>
        <taxon>Bacilli</taxon>
        <taxon>Bacillales</taxon>
        <taxon>Bacillaceae</taxon>
        <taxon>Oceanobacillus</taxon>
    </lineage>
</organism>
<gene>
    <name evidence="1" type="primary">dapH</name>
    <name type="ordered locus">OB1402</name>
</gene>
<protein>
    <recommendedName>
        <fullName evidence="1">2,3,4,5-tetrahydropyridine-2,6-dicarboxylate N-acetyltransferase</fullName>
        <ecNumber evidence="1">2.3.1.89</ecNumber>
    </recommendedName>
    <alternativeName>
        <fullName evidence="1">Tetrahydrodipicolinate N-acetyltransferase</fullName>
        <shortName evidence="1">THP acetyltransferase</shortName>
        <shortName evidence="1">Tetrahydropicolinate acetylase</shortName>
    </alternativeName>
</protein>
<sequence>MMDANEIIQFISDSKKSTPVKVYVKGELDKLSASNTIKTFVDSKSGTIFGEWKDIQAYLEENKSLIEDYIIENDRRNSAIPMLDLKNINARIEPGAIIRDQVEIGDGAVIMMGASINIGSVIGEGTMIDMNAVLGGRATVGKNCHIGAGSVLAGVIEPPSAKPVIVEDDVVIGANVVILEGITVGKGSIVAAGSIVTKDVAPNTLVGGTPAKVLKEIDEQTKSKTEIKQELRKLDN</sequence>
<accession>Q8ERA4</accession>
<comment type="function">
    <text evidence="1">Catalyzes the transfer of an acetyl group from acetyl-CoA to tetrahydrodipicolinate.</text>
</comment>
<comment type="catalytic activity">
    <reaction evidence="1">
        <text>(S)-2,3,4,5-tetrahydrodipicolinate + acetyl-CoA + H2O = L-2-acetamido-6-oxoheptanedioate + CoA</text>
        <dbReference type="Rhea" id="RHEA:13085"/>
        <dbReference type="ChEBI" id="CHEBI:15377"/>
        <dbReference type="ChEBI" id="CHEBI:16845"/>
        <dbReference type="ChEBI" id="CHEBI:57287"/>
        <dbReference type="ChEBI" id="CHEBI:57288"/>
        <dbReference type="ChEBI" id="CHEBI:58117"/>
        <dbReference type="EC" id="2.3.1.89"/>
    </reaction>
</comment>
<comment type="pathway">
    <text evidence="1">Amino-acid biosynthesis; L-lysine biosynthesis via DAP pathway; LL-2,6-diaminopimelate from (S)-tetrahydrodipicolinate (acetylase route): step 1/3.</text>
</comment>
<comment type="similarity">
    <text evidence="1">Belongs to the transferase hexapeptide repeat family. DapH subfamily.</text>
</comment>
<evidence type="ECO:0000255" key="1">
    <source>
        <dbReference type="HAMAP-Rule" id="MF_01691"/>
    </source>
</evidence>
<feature type="chain" id="PRO_0000376682" description="2,3,4,5-tetrahydropyridine-2,6-dicarboxylate N-acetyltransferase">
    <location>
        <begin position="1"/>
        <end position="236"/>
    </location>
</feature>
<name>DAPH_OCEIH</name>
<proteinExistence type="inferred from homology"/>
<keyword id="KW-0012">Acyltransferase</keyword>
<keyword id="KW-0028">Amino-acid biosynthesis</keyword>
<keyword id="KW-0220">Diaminopimelate biosynthesis</keyword>
<keyword id="KW-0457">Lysine biosynthesis</keyword>
<keyword id="KW-1185">Reference proteome</keyword>
<keyword id="KW-0677">Repeat</keyword>
<keyword id="KW-0808">Transferase</keyword>
<reference key="1">
    <citation type="journal article" date="2002" name="Nucleic Acids Res.">
        <title>Genome sequence of Oceanobacillus iheyensis isolated from the Iheya Ridge and its unexpected adaptive capabilities to extreme environments.</title>
        <authorList>
            <person name="Takami H."/>
            <person name="Takaki Y."/>
            <person name="Uchiyama I."/>
        </authorList>
    </citation>
    <scope>NUCLEOTIDE SEQUENCE [LARGE SCALE GENOMIC DNA]</scope>
    <source>
        <strain>DSM 14371 / CIP 107618 / JCM 11309 / KCTC 3954 / HTE831</strain>
    </source>
</reference>